<dbReference type="EMBL" id="CP000662">
    <property type="protein sequence ID" value="ABP72120.1"/>
    <property type="molecule type" value="Genomic_DNA"/>
</dbReference>
<dbReference type="KEGG" id="rsq:Rsph17025_3236"/>
<dbReference type="HOGENOM" id="CLU_149349_0_0_5"/>
<dbReference type="BioCyc" id="RSPH349102:G1G8M-3340-MONOMER"/>
<dbReference type="GO" id="GO:0009399">
    <property type="term" value="P:nitrogen fixation"/>
    <property type="evidence" value="ECO:0007669"/>
    <property type="project" value="UniProtKB-UniRule"/>
</dbReference>
<dbReference type="HAMAP" id="MF_02117">
    <property type="entry name" value="CowN"/>
    <property type="match status" value="1"/>
</dbReference>
<dbReference type="InterPro" id="IPR024899">
    <property type="entry name" value="CowN"/>
</dbReference>
<dbReference type="NCBIfam" id="NF033689">
    <property type="entry name" value="N2Fix_CO_CowN"/>
    <property type="match status" value="1"/>
</dbReference>
<dbReference type="Pfam" id="PF20543">
    <property type="entry name" value="CowN"/>
    <property type="match status" value="1"/>
</dbReference>
<geneLocation type="plasmid">
    <name>pRSPA01</name>
</geneLocation>
<accession>A4WXK6</accession>
<proteinExistence type="inferred from homology"/>
<evidence type="ECO:0000255" key="1">
    <source>
        <dbReference type="HAMAP-Rule" id="MF_02117"/>
    </source>
</evidence>
<name>COWN_CERS5</name>
<reference key="1">
    <citation type="submission" date="2007-04" db="EMBL/GenBank/DDBJ databases">
        <title>Complete sequence of plasmid pRSPA01 of Rhodobacter sphaeroides ATCC 17025.</title>
        <authorList>
            <consortium name="US DOE Joint Genome Institute"/>
            <person name="Copeland A."/>
            <person name="Lucas S."/>
            <person name="Lapidus A."/>
            <person name="Barry K."/>
            <person name="Detter J.C."/>
            <person name="Glavina del Rio T."/>
            <person name="Hammon N."/>
            <person name="Israni S."/>
            <person name="Dalin E."/>
            <person name="Tice H."/>
            <person name="Pitluck S."/>
            <person name="Chertkov O."/>
            <person name="Brettin T."/>
            <person name="Bruce D."/>
            <person name="Han C."/>
            <person name="Schmutz J."/>
            <person name="Larimer F."/>
            <person name="Land M."/>
            <person name="Hauser L."/>
            <person name="Kyrpides N."/>
            <person name="Kim E."/>
            <person name="Richardson P."/>
            <person name="Mackenzie C."/>
            <person name="Choudhary M."/>
            <person name="Donohue T.J."/>
            <person name="Kaplan S."/>
        </authorList>
    </citation>
    <scope>NUCLEOTIDE SEQUENCE [LARGE SCALE GENOMIC DNA]</scope>
    <source>
        <strain>ATCC 17025 / ATH 2.4.3</strain>
    </source>
</reference>
<sequence>MNDHTPDRYVTFLGIDCDAKADRMMEMLSARLASTDSPWVRYFEQKLAEKARMATDNLHFVGSQINSLYSFFEEAEDEEGLDLLWHLEHNCC</sequence>
<gene>
    <name evidence="1" type="primary">cowN</name>
    <name type="ordered locus">Rsph17025_3236</name>
</gene>
<protein>
    <recommendedName>
        <fullName evidence="1">N(2)-fixation sustaining protein CowN</fullName>
    </recommendedName>
    <alternativeName>
        <fullName evidence="1">CO weal-nitrogenase</fullName>
    </alternativeName>
</protein>
<keyword id="KW-0535">Nitrogen fixation</keyword>
<keyword id="KW-0614">Plasmid</keyword>
<feature type="chain" id="PRO_0000407264" description="N(2)-fixation sustaining protein CowN">
    <location>
        <begin position="1"/>
        <end position="92"/>
    </location>
</feature>
<comment type="function">
    <text evidence="1">Is required to sustain N(2)-dependent growth in the presence of low levels of carbon monoxide (CO). Probably acts by protecting the N(2) fixation ability of the nitrogenase complex, which is inactivated in the presence of CO.</text>
</comment>
<comment type="similarity">
    <text evidence="1">Belongs to the CowN family.</text>
</comment>
<organism>
    <name type="scientific">Cereibacter sphaeroides (strain ATCC 17025 / ATH 2.4.3)</name>
    <name type="common">Rhodobacter sphaeroides</name>
    <dbReference type="NCBI Taxonomy" id="349102"/>
    <lineage>
        <taxon>Bacteria</taxon>
        <taxon>Pseudomonadati</taxon>
        <taxon>Pseudomonadota</taxon>
        <taxon>Alphaproteobacteria</taxon>
        <taxon>Rhodobacterales</taxon>
        <taxon>Paracoccaceae</taxon>
        <taxon>Cereibacter</taxon>
    </lineage>
</organism>